<reference key="1">
    <citation type="submission" date="2004-11" db="EMBL/GenBank/DDBJ databases">
        <title>Complete genome sequence of Thermus thermophilus HB8.</title>
        <authorList>
            <person name="Masui R."/>
            <person name="Kurokawa K."/>
            <person name="Nakagawa N."/>
            <person name="Tokunaga F."/>
            <person name="Koyama Y."/>
            <person name="Shibata T."/>
            <person name="Oshima T."/>
            <person name="Yokoyama S."/>
            <person name="Yasunaga T."/>
            <person name="Kuramitsu S."/>
        </authorList>
    </citation>
    <scope>NUCLEOTIDE SEQUENCE [LARGE SCALE GENOMIC DNA]</scope>
    <source>
        <strain>ATCC 27634 / DSM 579 / HB8</strain>
    </source>
</reference>
<comment type="function">
    <text evidence="1">Involved in mRNA degradation. Catalyzes the phosphorolysis of single-stranded polyribonucleotides processively in the 3'- to 5'-direction.</text>
</comment>
<comment type="catalytic activity">
    <reaction evidence="1">
        <text>RNA(n+1) + phosphate = RNA(n) + a ribonucleoside 5'-diphosphate</text>
        <dbReference type="Rhea" id="RHEA:22096"/>
        <dbReference type="Rhea" id="RHEA-COMP:14527"/>
        <dbReference type="Rhea" id="RHEA-COMP:17342"/>
        <dbReference type="ChEBI" id="CHEBI:43474"/>
        <dbReference type="ChEBI" id="CHEBI:57930"/>
        <dbReference type="ChEBI" id="CHEBI:140395"/>
        <dbReference type="EC" id="2.7.7.8"/>
    </reaction>
</comment>
<comment type="cofactor">
    <cofactor evidence="1">
        <name>Mg(2+)</name>
        <dbReference type="ChEBI" id="CHEBI:18420"/>
    </cofactor>
</comment>
<comment type="subcellular location">
    <subcellularLocation>
        <location evidence="1">Cytoplasm</location>
    </subcellularLocation>
</comment>
<comment type="similarity">
    <text evidence="1">Belongs to the polyribonucleotide nucleotidyltransferase family.</text>
</comment>
<gene>
    <name evidence="1" type="primary">pnp</name>
    <name type="ordered locus">TTHA1139</name>
</gene>
<protein>
    <recommendedName>
        <fullName evidence="1">Polyribonucleotide nucleotidyltransferase</fullName>
        <ecNumber evidence="1">2.7.7.8</ecNumber>
    </recommendedName>
    <alternativeName>
        <fullName evidence="1">Polynucleotide phosphorylase</fullName>
        <shortName evidence="1">PNPase</shortName>
    </alternativeName>
</protein>
<name>PNP_THET8</name>
<sequence>MEGTPNVPQAHRYELTLAGRPLVLETGKYAKQASGSVLVRYADTVVLATAQASETPVEADFLPLTVEFEERHYAVGKIPGSFMRREGRPGEKAILSARMTDRPIRPLFPKGFRHEVQIIVTVLSADQKNPPDILGPIAASAALMLSDIPWEGPIAAVRVGLIGGSFVLNPTLQELEESQLDLVVAGSKEAILMVEAEAGEVDEETLVQALEFAHKEMQPILELQEAMARELAKPKMAWTPPESLPEEEKEALYRLALERGLSQVLQTASKGERSRALAEFAERLIAEALPKGEDGTPDEGKKPLYESAFDEVVRRELRRLVLEEGKRADGRGPKDLRPIWIEVDVLPRAHGSAVFTRGETQVLGTVTLGTGRDEQILDDLGIDETEKFLVHYNFPPFSTGEVRRLRGVSRREVGHGNLAKRALKAVMPKEEDFPYTIRVVGDVLESNGSSSMATVCAGCLALMDAGVPIRAPVAGVAMGLVWEENRAVILTDILGLEDALGDMDFKVAGTRKGVTALQMDNKVGGLPREVLKEALLQAREARLKILDLMEAVLPAPRPELKPFAPRILSLKVPVEKIGLVIGPGGKNVRALEELGVEVDIEEDGTVRIYSSDLQAALEAKKRIEDLTREAKVGEIYEGTVTRITPFGAFISLFPGTEGLLHISQIAPGRVARVEDHLKVGDVIKVKVHRIDERGKIDLIRPELEGKIPPRRRR</sequence>
<keyword id="KW-0963">Cytoplasm</keyword>
<keyword id="KW-0460">Magnesium</keyword>
<keyword id="KW-0479">Metal-binding</keyword>
<keyword id="KW-0548">Nucleotidyltransferase</keyword>
<keyword id="KW-1185">Reference proteome</keyword>
<keyword id="KW-0694">RNA-binding</keyword>
<keyword id="KW-0808">Transferase</keyword>
<proteinExistence type="inferred from homology"/>
<feature type="chain" id="PRO_0000329917" description="Polyribonucleotide nucleotidyltransferase">
    <location>
        <begin position="1"/>
        <end position="713"/>
    </location>
</feature>
<feature type="domain" description="KH" evidence="1">
    <location>
        <begin position="565"/>
        <end position="631"/>
    </location>
</feature>
<feature type="domain" description="S1 motif" evidence="1">
    <location>
        <begin position="633"/>
        <end position="701"/>
    </location>
</feature>
<feature type="binding site" evidence="1">
    <location>
        <position position="498"/>
    </location>
    <ligand>
        <name>Mg(2+)</name>
        <dbReference type="ChEBI" id="CHEBI:18420"/>
    </ligand>
</feature>
<feature type="binding site" evidence="1">
    <location>
        <position position="504"/>
    </location>
    <ligand>
        <name>Mg(2+)</name>
        <dbReference type="ChEBI" id="CHEBI:18420"/>
    </ligand>
</feature>
<dbReference type="EC" id="2.7.7.8" evidence="1"/>
<dbReference type="EMBL" id="AP008226">
    <property type="protein sequence ID" value="BAD70962.1"/>
    <property type="molecule type" value="Genomic_DNA"/>
</dbReference>
<dbReference type="RefSeq" id="WP_011228463.1">
    <property type="nucleotide sequence ID" value="NC_006461.1"/>
</dbReference>
<dbReference type="RefSeq" id="YP_144405.1">
    <property type="nucleotide sequence ID" value="NC_006461.1"/>
</dbReference>
<dbReference type="SMR" id="Q5SJ75"/>
<dbReference type="EnsemblBacteria" id="BAD70962">
    <property type="protein sequence ID" value="BAD70962"/>
    <property type="gene ID" value="BAD70962"/>
</dbReference>
<dbReference type="GeneID" id="3168440"/>
<dbReference type="KEGG" id="ttj:TTHA1139"/>
<dbReference type="PATRIC" id="fig|300852.9.peg.1118"/>
<dbReference type="eggNOG" id="COG1185">
    <property type="taxonomic scope" value="Bacteria"/>
</dbReference>
<dbReference type="HOGENOM" id="CLU_004217_2_2_0"/>
<dbReference type="PhylomeDB" id="Q5SJ75"/>
<dbReference type="Proteomes" id="UP000000532">
    <property type="component" value="Chromosome"/>
</dbReference>
<dbReference type="GO" id="GO:0005829">
    <property type="term" value="C:cytosol"/>
    <property type="evidence" value="ECO:0007669"/>
    <property type="project" value="TreeGrafter"/>
</dbReference>
<dbReference type="GO" id="GO:0000175">
    <property type="term" value="F:3'-5'-RNA exonuclease activity"/>
    <property type="evidence" value="ECO:0007669"/>
    <property type="project" value="TreeGrafter"/>
</dbReference>
<dbReference type="GO" id="GO:0000287">
    <property type="term" value="F:magnesium ion binding"/>
    <property type="evidence" value="ECO:0007669"/>
    <property type="project" value="UniProtKB-UniRule"/>
</dbReference>
<dbReference type="GO" id="GO:0004654">
    <property type="term" value="F:polyribonucleotide nucleotidyltransferase activity"/>
    <property type="evidence" value="ECO:0007669"/>
    <property type="project" value="UniProtKB-UniRule"/>
</dbReference>
<dbReference type="GO" id="GO:0003723">
    <property type="term" value="F:RNA binding"/>
    <property type="evidence" value="ECO:0007669"/>
    <property type="project" value="UniProtKB-UniRule"/>
</dbReference>
<dbReference type="GO" id="GO:0006402">
    <property type="term" value="P:mRNA catabolic process"/>
    <property type="evidence" value="ECO:0007669"/>
    <property type="project" value="UniProtKB-UniRule"/>
</dbReference>
<dbReference type="GO" id="GO:0006396">
    <property type="term" value="P:RNA processing"/>
    <property type="evidence" value="ECO:0007669"/>
    <property type="project" value="InterPro"/>
</dbReference>
<dbReference type="CDD" id="cd02393">
    <property type="entry name" value="KH-I_PNPase"/>
    <property type="match status" value="1"/>
</dbReference>
<dbReference type="CDD" id="cd11363">
    <property type="entry name" value="RNase_PH_PNPase_1"/>
    <property type="match status" value="1"/>
</dbReference>
<dbReference type="CDD" id="cd11364">
    <property type="entry name" value="RNase_PH_PNPase_2"/>
    <property type="match status" value="1"/>
</dbReference>
<dbReference type="CDD" id="cd04472">
    <property type="entry name" value="S1_PNPase"/>
    <property type="match status" value="1"/>
</dbReference>
<dbReference type="FunFam" id="3.30.1370.10:FF:000001">
    <property type="entry name" value="Polyribonucleotide nucleotidyltransferase"/>
    <property type="match status" value="1"/>
</dbReference>
<dbReference type="FunFam" id="3.30.230.70:FF:000001">
    <property type="entry name" value="Polyribonucleotide nucleotidyltransferase"/>
    <property type="match status" value="1"/>
</dbReference>
<dbReference type="FunFam" id="3.30.230.70:FF:000002">
    <property type="entry name" value="Polyribonucleotide nucleotidyltransferase"/>
    <property type="match status" value="1"/>
</dbReference>
<dbReference type="FunFam" id="2.40.50.140:FF:000189">
    <property type="entry name" value="Polyribonucleotide nucleotidyltransferase, putative"/>
    <property type="match status" value="1"/>
</dbReference>
<dbReference type="Gene3D" id="3.30.230.70">
    <property type="entry name" value="GHMP Kinase, N-terminal domain"/>
    <property type="match status" value="2"/>
</dbReference>
<dbReference type="Gene3D" id="3.30.1370.10">
    <property type="entry name" value="K Homology domain, type 1"/>
    <property type="match status" value="1"/>
</dbReference>
<dbReference type="Gene3D" id="2.40.50.140">
    <property type="entry name" value="Nucleic acid-binding proteins"/>
    <property type="match status" value="1"/>
</dbReference>
<dbReference type="HAMAP" id="MF_01595">
    <property type="entry name" value="PNPase"/>
    <property type="match status" value="1"/>
</dbReference>
<dbReference type="InterPro" id="IPR001247">
    <property type="entry name" value="ExoRNase_PH_dom1"/>
</dbReference>
<dbReference type="InterPro" id="IPR015847">
    <property type="entry name" value="ExoRNase_PH_dom2"/>
</dbReference>
<dbReference type="InterPro" id="IPR036345">
    <property type="entry name" value="ExoRNase_PH_dom2_sf"/>
</dbReference>
<dbReference type="InterPro" id="IPR004087">
    <property type="entry name" value="KH_dom"/>
</dbReference>
<dbReference type="InterPro" id="IPR004088">
    <property type="entry name" value="KH_dom_type_1"/>
</dbReference>
<dbReference type="InterPro" id="IPR036612">
    <property type="entry name" value="KH_dom_type_1_sf"/>
</dbReference>
<dbReference type="InterPro" id="IPR012340">
    <property type="entry name" value="NA-bd_OB-fold"/>
</dbReference>
<dbReference type="InterPro" id="IPR012162">
    <property type="entry name" value="PNPase"/>
</dbReference>
<dbReference type="InterPro" id="IPR027408">
    <property type="entry name" value="PNPase/RNase_PH_dom_sf"/>
</dbReference>
<dbReference type="InterPro" id="IPR015848">
    <property type="entry name" value="PNPase_PH_RNA-bd_bac/org-type"/>
</dbReference>
<dbReference type="InterPro" id="IPR020568">
    <property type="entry name" value="Ribosomal_Su5_D2-typ_SF"/>
</dbReference>
<dbReference type="InterPro" id="IPR003029">
    <property type="entry name" value="S1_domain"/>
</dbReference>
<dbReference type="NCBIfam" id="TIGR03591">
    <property type="entry name" value="polynuc_phos"/>
    <property type="match status" value="1"/>
</dbReference>
<dbReference type="NCBIfam" id="NF008805">
    <property type="entry name" value="PRK11824.1"/>
    <property type="match status" value="1"/>
</dbReference>
<dbReference type="PANTHER" id="PTHR11252">
    <property type="entry name" value="POLYRIBONUCLEOTIDE NUCLEOTIDYLTRANSFERASE"/>
    <property type="match status" value="1"/>
</dbReference>
<dbReference type="PANTHER" id="PTHR11252:SF0">
    <property type="entry name" value="POLYRIBONUCLEOTIDE NUCLEOTIDYLTRANSFERASE 1, MITOCHONDRIAL"/>
    <property type="match status" value="1"/>
</dbReference>
<dbReference type="Pfam" id="PF00013">
    <property type="entry name" value="KH_1"/>
    <property type="match status" value="1"/>
</dbReference>
<dbReference type="Pfam" id="PF03726">
    <property type="entry name" value="PNPase"/>
    <property type="match status" value="1"/>
</dbReference>
<dbReference type="Pfam" id="PF01138">
    <property type="entry name" value="RNase_PH"/>
    <property type="match status" value="2"/>
</dbReference>
<dbReference type="Pfam" id="PF03725">
    <property type="entry name" value="RNase_PH_C"/>
    <property type="match status" value="2"/>
</dbReference>
<dbReference type="Pfam" id="PF00575">
    <property type="entry name" value="S1"/>
    <property type="match status" value="1"/>
</dbReference>
<dbReference type="PIRSF" id="PIRSF005499">
    <property type="entry name" value="PNPase"/>
    <property type="match status" value="1"/>
</dbReference>
<dbReference type="SMART" id="SM00322">
    <property type="entry name" value="KH"/>
    <property type="match status" value="1"/>
</dbReference>
<dbReference type="SMART" id="SM00316">
    <property type="entry name" value="S1"/>
    <property type="match status" value="1"/>
</dbReference>
<dbReference type="SUPFAM" id="SSF54791">
    <property type="entry name" value="Eukaryotic type KH-domain (KH-domain type I)"/>
    <property type="match status" value="1"/>
</dbReference>
<dbReference type="SUPFAM" id="SSF50249">
    <property type="entry name" value="Nucleic acid-binding proteins"/>
    <property type="match status" value="1"/>
</dbReference>
<dbReference type="SUPFAM" id="SSF55666">
    <property type="entry name" value="Ribonuclease PH domain 2-like"/>
    <property type="match status" value="2"/>
</dbReference>
<dbReference type="SUPFAM" id="SSF54211">
    <property type="entry name" value="Ribosomal protein S5 domain 2-like"/>
    <property type="match status" value="2"/>
</dbReference>
<dbReference type="PROSITE" id="PS50084">
    <property type="entry name" value="KH_TYPE_1"/>
    <property type="match status" value="1"/>
</dbReference>
<dbReference type="PROSITE" id="PS50126">
    <property type="entry name" value="S1"/>
    <property type="match status" value="1"/>
</dbReference>
<evidence type="ECO:0000255" key="1">
    <source>
        <dbReference type="HAMAP-Rule" id="MF_01595"/>
    </source>
</evidence>
<organism>
    <name type="scientific">Thermus thermophilus (strain ATCC 27634 / DSM 579 / HB8)</name>
    <dbReference type="NCBI Taxonomy" id="300852"/>
    <lineage>
        <taxon>Bacteria</taxon>
        <taxon>Thermotogati</taxon>
        <taxon>Deinococcota</taxon>
        <taxon>Deinococci</taxon>
        <taxon>Thermales</taxon>
        <taxon>Thermaceae</taxon>
        <taxon>Thermus</taxon>
    </lineage>
</organism>
<accession>Q5SJ75</accession>